<accession>Q07LY2</accession>
<gene>
    <name evidence="1" type="primary">phnC2</name>
    <name type="ordered locus">RPE_3115</name>
</gene>
<name>PHNC2_RHOP5</name>
<protein>
    <recommendedName>
        <fullName evidence="1">Phosphonates import ATP-binding protein PhnC 2</fullName>
        <ecNumber evidence="1">7.3.2.2</ecNumber>
    </recommendedName>
</protein>
<dbReference type="EC" id="7.3.2.2" evidence="1"/>
<dbReference type="EMBL" id="CP000463">
    <property type="protein sequence ID" value="ABJ07052.1"/>
    <property type="status" value="ALT_INIT"/>
    <property type="molecule type" value="Genomic_DNA"/>
</dbReference>
<dbReference type="SMR" id="Q07LY2"/>
<dbReference type="STRING" id="316055.RPE_3115"/>
<dbReference type="KEGG" id="rpe:RPE_3115"/>
<dbReference type="eggNOG" id="COG3638">
    <property type="taxonomic scope" value="Bacteria"/>
</dbReference>
<dbReference type="HOGENOM" id="CLU_000604_1_22_5"/>
<dbReference type="OrthoDB" id="9802264at2"/>
<dbReference type="GO" id="GO:0005886">
    <property type="term" value="C:plasma membrane"/>
    <property type="evidence" value="ECO:0007669"/>
    <property type="project" value="UniProtKB-SubCell"/>
</dbReference>
<dbReference type="GO" id="GO:0015416">
    <property type="term" value="F:ABC-type phosphonate transporter activity"/>
    <property type="evidence" value="ECO:0007669"/>
    <property type="project" value="UniProtKB-EC"/>
</dbReference>
<dbReference type="GO" id="GO:0005524">
    <property type="term" value="F:ATP binding"/>
    <property type="evidence" value="ECO:0007669"/>
    <property type="project" value="UniProtKB-KW"/>
</dbReference>
<dbReference type="GO" id="GO:0016887">
    <property type="term" value="F:ATP hydrolysis activity"/>
    <property type="evidence" value="ECO:0007669"/>
    <property type="project" value="InterPro"/>
</dbReference>
<dbReference type="CDD" id="cd03256">
    <property type="entry name" value="ABC_PhnC_transporter"/>
    <property type="match status" value="1"/>
</dbReference>
<dbReference type="Gene3D" id="3.40.50.300">
    <property type="entry name" value="P-loop containing nucleotide triphosphate hydrolases"/>
    <property type="match status" value="1"/>
</dbReference>
<dbReference type="InterPro" id="IPR003593">
    <property type="entry name" value="AAA+_ATPase"/>
</dbReference>
<dbReference type="InterPro" id="IPR003439">
    <property type="entry name" value="ABC_transporter-like_ATP-bd"/>
</dbReference>
<dbReference type="InterPro" id="IPR017871">
    <property type="entry name" value="ABC_transporter-like_CS"/>
</dbReference>
<dbReference type="InterPro" id="IPR012693">
    <property type="entry name" value="ABC_transpr_PhnC"/>
</dbReference>
<dbReference type="InterPro" id="IPR050086">
    <property type="entry name" value="MetN_ABC_transporter-like"/>
</dbReference>
<dbReference type="InterPro" id="IPR027417">
    <property type="entry name" value="P-loop_NTPase"/>
</dbReference>
<dbReference type="NCBIfam" id="TIGR02315">
    <property type="entry name" value="ABC_phnC"/>
    <property type="match status" value="1"/>
</dbReference>
<dbReference type="PANTHER" id="PTHR43166">
    <property type="entry name" value="AMINO ACID IMPORT ATP-BINDING PROTEIN"/>
    <property type="match status" value="1"/>
</dbReference>
<dbReference type="PANTHER" id="PTHR43166:SF6">
    <property type="entry name" value="PHOSPHONATES IMPORT ATP-BINDING PROTEIN PHNC"/>
    <property type="match status" value="1"/>
</dbReference>
<dbReference type="Pfam" id="PF00005">
    <property type="entry name" value="ABC_tran"/>
    <property type="match status" value="1"/>
</dbReference>
<dbReference type="SMART" id="SM00382">
    <property type="entry name" value="AAA"/>
    <property type="match status" value="1"/>
</dbReference>
<dbReference type="SUPFAM" id="SSF52540">
    <property type="entry name" value="P-loop containing nucleoside triphosphate hydrolases"/>
    <property type="match status" value="1"/>
</dbReference>
<dbReference type="PROSITE" id="PS00211">
    <property type="entry name" value="ABC_TRANSPORTER_1"/>
    <property type="match status" value="1"/>
</dbReference>
<dbReference type="PROSITE" id="PS50893">
    <property type="entry name" value="ABC_TRANSPORTER_2"/>
    <property type="match status" value="1"/>
</dbReference>
<dbReference type="PROSITE" id="PS51249">
    <property type="entry name" value="PHNC"/>
    <property type="match status" value="1"/>
</dbReference>
<keyword id="KW-0067">ATP-binding</keyword>
<keyword id="KW-0997">Cell inner membrane</keyword>
<keyword id="KW-1003">Cell membrane</keyword>
<keyword id="KW-0472">Membrane</keyword>
<keyword id="KW-0547">Nucleotide-binding</keyword>
<keyword id="KW-0918">Phosphonate transport</keyword>
<keyword id="KW-1278">Translocase</keyword>
<keyword id="KW-0813">Transport</keyword>
<evidence type="ECO:0000255" key="1">
    <source>
        <dbReference type="HAMAP-Rule" id="MF_01713"/>
    </source>
</evidence>
<evidence type="ECO:0000305" key="2"/>
<reference key="1">
    <citation type="submission" date="2006-09" db="EMBL/GenBank/DDBJ databases">
        <title>Complete sequence of Rhodopseudomonas palustris BisA53.</title>
        <authorList>
            <consortium name="US DOE Joint Genome Institute"/>
            <person name="Copeland A."/>
            <person name="Lucas S."/>
            <person name="Lapidus A."/>
            <person name="Barry K."/>
            <person name="Detter J.C."/>
            <person name="Glavina del Rio T."/>
            <person name="Hammon N."/>
            <person name="Israni S."/>
            <person name="Dalin E."/>
            <person name="Tice H."/>
            <person name="Pitluck S."/>
            <person name="Chain P."/>
            <person name="Malfatti S."/>
            <person name="Shin M."/>
            <person name="Vergez L."/>
            <person name="Schmutz J."/>
            <person name="Larimer F."/>
            <person name="Land M."/>
            <person name="Hauser L."/>
            <person name="Pelletier D.A."/>
            <person name="Kyrpides N."/>
            <person name="Kim E."/>
            <person name="Harwood C.S."/>
            <person name="Oda Y."/>
            <person name="Richardson P."/>
        </authorList>
    </citation>
    <scope>NUCLEOTIDE SEQUENCE [LARGE SCALE GENOMIC DNA]</scope>
    <source>
        <strain>BisA53</strain>
    </source>
</reference>
<organism>
    <name type="scientific">Rhodopseudomonas palustris (strain BisA53)</name>
    <dbReference type="NCBI Taxonomy" id="316055"/>
    <lineage>
        <taxon>Bacteria</taxon>
        <taxon>Pseudomonadati</taxon>
        <taxon>Pseudomonadota</taxon>
        <taxon>Alphaproteobacteria</taxon>
        <taxon>Hyphomicrobiales</taxon>
        <taxon>Nitrobacteraceae</taxon>
        <taxon>Rhodopseudomonas</taxon>
    </lineage>
</organism>
<comment type="function">
    <text evidence="1">Part of the ABC transporter complex PhnCDE involved in phosphonates import. Responsible for energy coupling to the transport system.</text>
</comment>
<comment type="catalytic activity">
    <reaction evidence="1">
        <text>phosphonate(out) + ATP + H2O = phosphonate(in) + ADP + phosphate + H(+)</text>
        <dbReference type="Rhea" id="RHEA:18065"/>
        <dbReference type="ChEBI" id="CHEBI:15377"/>
        <dbReference type="ChEBI" id="CHEBI:15378"/>
        <dbReference type="ChEBI" id="CHEBI:16215"/>
        <dbReference type="ChEBI" id="CHEBI:30616"/>
        <dbReference type="ChEBI" id="CHEBI:43474"/>
        <dbReference type="ChEBI" id="CHEBI:456216"/>
        <dbReference type="EC" id="7.3.2.2"/>
    </reaction>
</comment>
<comment type="subunit">
    <text evidence="1">The complex is composed of two ATP-binding proteins (PhnC), two transmembrane proteins (PhnE) and a solute-binding protein (PhnD).</text>
</comment>
<comment type="subcellular location">
    <subcellularLocation>
        <location evidence="1">Cell inner membrane</location>
        <topology evidence="1">Peripheral membrane protein</topology>
    </subcellularLocation>
</comment>
<comment type="similarity">
    <text evidence="1">Belongs to the ABC transporter superfamily. Phosphonates importer (TC 3.A.1.9.1) family.</text>
</comment>
<comment type="sequence caution" evidence="2">
    <conflict type="erroneous initiation">
        <sequence resource="EMBL-CDS" id="ABJ07052"/>
    </conflict>
</comment>
<proteinExistence type="inferred from homology"/>
<feature type="chain" id="PRO_0000274742" description="Phosphonates import ATP-binding protein PhnC 2">
    <location>
        <begin position="1"/>
        <end position="270"/>
    </location>
</feature>
<feature type="domain" description="ABC transporter" evidence="1">
    <location>
        <begin position="2"/>
        <end position="245"/>
    </location>
</feature>
<feature type="binding site" evidence="1">
    <location>
        <begin position="34"/>
        <end position="41"/>
    </location>
    <ligand>
        <name>ATP</name>
        <dbReference type="ChEBI" id="CHEBI:30616"/>
    </ligand>
</feature>
<sequence length="270" mass="29317">MLVVEGLTCRFGTKAAVDNASFSITPGGFVGVIGRSGAGKSTLLRMINRLAEPSEGRILFHDQDVTALQGQALRQWRARSAMIFQQFNLIGRLDVLTNVLMGRLAEIPSWRSLAQLWPEKDKALAMSALDQFDMAAYAAQRADQLSGGQQQRVAIARALVQQPDIVLADEPIASLDPRNTKIVMDALLRINKHFGITVICNLHSLDLARNYCDRLIGMASGRVVFDGAPEQLTDQIARELYDLEANEVMGAEHHVPGASSVPELAGAVAA</sequence>